<proteinExistence type="inferred from homology"/>
<accession>A9QZ60</accession>
<evidence type="ECO:0000255" key="1">
    <source>
        <dbReference type="HAMAP-Rule" id="MF_01172"/>
    </source>
</evidence>
<feature type="chain" id="PRO_1000138034" description="N-succinylarginine dihydrolase">
    <location>
        <begin position="1"/>
        <end position="447"/>
    </location>
</feature>
<feature type="active site" evidence="1">
    <location>
        <position position="174"/>
    </location>
</feature>
<feature type="active site" evidence="1">
    <location>
        <position position="249"/>
    </location>
</feature>
<feature type="active site" description="Nucleophile" evidence="1">
    <location>
        <position position="370"/>
    </location>
</feature>
<feature type="binding site" evidence="1">
    <location>
        <begin position="19"/>
        <end position="28"/>
    </location>
    <ligand>
        <name>substrate</name>
    </ligand>
</feature>
<feature type="binding site" evidence="1">
    <location>
        <position position="110"/>
    </location>
    <ligand>
        <name>substrate</name>
    </ligand>
</feature>
<feature type="binding site" evidence="1">
    <location>
        <begin position="137"/>
        <end position="138"/>
    </location>
    <ligand>
        <name>substrate</name>
    </ligand>
</feature>
<feature type="binding site" evidence="1">
    <location>
        <position position="213"/>
    </location>
    <ligand>
        <name>substrate</name>
    </ligand>
</feature>
<feature type="binding site" evidence="1">
    <location>
        <position position="251"/>
    </location>
    <ligand>
        <name>substrate</name>
    </ligand>
</feature>
<feature type="binding site" evidence="1">
    <location>
        <position position="364"/>
    </location>
    <ligand>
        <name>substrate</name>
    </ligand>
</feature>
<dbReference type="EC" id="3.5.3.23" evidence="1"/>
<dbReference type="EMBL" id="CP000901">
    <property type="protein sequence ID" value="ABX87162.1"/>
    <property type="molecule type" value="Genomic_DNA"/>
</dbReference>
<dbReference type="RefSeq" id="WP_002212029.1">
    <property type="nucleotide sequence ID" value="NZ_CP009935.1"/>
</dbReference>
<dbReference type="SMR" id="A9QZ60"/>
<dbReference type="GeneID" id="49786049"/>
<dbReference type="KEGG" id="ypg:YpAngola_A2517"/>
<dbReference type="PATRIC" id="fig|349746.12.peg.3536"/>
<dbReference type="UniPathway" id="UPA00185">
    <property type="reaction ID" value="UER00280"/>
</dbReference>
<dbReference type="GO" id="GO:0009015">
    <property type="term" value="F:N-succinylarginine dihydrolase activity"/>
    <property type="evidence" value="ECO:0007669"/>
    <property type="project" value="UniProtKB-UniRule"/>
</dbReference>
<dbReference type="GO" id="GO:0019544">
    <property type="term" value="P:arginine catabolic process to glutamate"/>
    <property type="evidence" value="ECO:0007669"/>
    <property type="project" value="UniProtKB-UniRule"/>
</dbReference>
<dbReference type="GO" id="GO:0019545">
    <property type="term" value="P:arginine catabolic process to succinate"/>
    <property type="evidence" value="ECO:0007669"/>
    <property type="project" value="UniProtKB-UniRule"/>
</dbReference>
<dbReference type="Gene3D" id="3.75.10.20">
    <property type="entry name" value="Succinylarginine dihydrolase"/>
    <property type="match status" value="1"/>
</dbReference>
<dbReference type="HAMAP" id="MF_01172">
    <property type="entry name" value="AstB"/>
    <property type="match status" value="1"/>
</dbReference>
<dbReference type="InterPro" id="IPR037031">
    <property type="entry name" value="AstB_sf"/>
</dbReference>
<dbReference type="InterPro" id="IPR007079">
    <property type="entry name" value="SuccinylArg_d-Hdrlase_AstB"/>
</dbReference>
<dbReference type="NCBIfam" id="TIGR03241">
    <property type="entry name" value="arg_catab_astB"/>
    <property type="match status" value="1"/>
</dbReference>
<dbReference type="NCBIfam" id="NF009789">
    <property type="entry name" value="PRK13281.1"/>
    <property type="match status" value="1"/>
</dbReference>
<dbReference type="PANTHER" id="PTHR30420">
    <property type="entry name" value="N-SUCCINYLARGININE DIHYDROLASE"/>
    <property type="match status" value="1"/>
</dbReference>
<dbReference type="PANTHER" id="PTHR30420:SF2">
    <property type="entry name" value="N-SUCCINYLARGININE DIHYDROLASE"/>
    <property type="match status" value="1"/>
</dbReference>
<dbReference type="Pfam" id="PF04996">
    <property type="entry name" value="AstB"/>
    <property type="match status" value="1"/>
</dbReference>
<dbReference type="SUPFAM" id="SSF55909">
    <property type="entry name" value="Pentein"/>
    <property type="match status" value="1"/>
</dbReference>
<gene>
    <name evidence="1" type="primary">astB</name>
    <name type="ordered locus">YpAngola_A2517</name>
</gene>
<comment type="function">
    <text evidence="1">Catalyzes the hydrolysis of N(2)-succinylarginine into N(2)-succinylornithine, ammonia and CO(2).</text>
</comment>
<comment type="catalytic activity">
    <reaction evidence="1">
        <text>N(2)-succinyl-L-arginine + 2 H2O + 2 H(+) = N(2)-succinyl-L-ornithine + 2 NH4(+) + CO2</text>
        <dbReference type="Rhea" id="RHEA:19533"/>
        <dbReference type="ChEBI" id="CHEBI:15377"/>
        <dbReference type="ChEBI" id="CHEBI:15378"/>
        <dbReference type="ChEBI" id="CHEBI:16526"/>
        <dbReference type="ChEBI" id="CHEBI:28938"/>
        <dbReference type="ChEBI" id="CHEBI:58241"/>
        <dbReference type="ChEBI" id="CHEBI:58514"/>
        <dbReference type="EC" id="3.5.3.23"/>
    </reaction>
</comment>
<comment type="pathway">
    <text evidence="1">Amino-acid degradation; L-arginine degradation via AST pathway; L-glutamate and succinate from L-arginine: step 2/5.</text>
</comment>
<comment type="subunit">
    <text evidence="1">Homodimer.</text>
</comment>
<comment type="similarity">
    <text evidence="1">Belongs to the succinylarginine dihydrolase family.</text>
</comment>
<protein>
    <recommendedName>
        <fullName evidence="1">N-succinylarginine dihydrolase</fullName>
        <ecNumber evidence="1">3.5.3.23</ecNumber>
    </recommendedName>
</protein>
<reference key="1">
    <citation type="journal article" date="2010" name="J. Bacteriol.">
        <title>Genome sequence of the deep-rooted Yersinia pestis strain Angola reveals new insights into the evolution and pangenome of the plague bacterium.</title>
        <authorList>
            <person name="Eppinger M."/>
            <person name="Worsham P.L."/>
            <person name="Nikolich M.P."/>
            <person name="Riley D.R."/>
            <person name="Sebastian Y."/>
            <person name="Mou S."/>
            <person name="Achtman M."/>
            <person name="Lindler L.E."/>
            <person name="Ravel J."/>
        </authorList>
    </citation>
    <scope>NUCLEOTIDE SEQUENCE [LARGE SCALE GENOMIC DNA]</scope>
    <source>
        <strain>Angola</strain>
    </source>
</reference>
<keyword id="KW-0056">Arginine metabolism</keyword>
<keyword id="KW-0378">Hydrolase</keyword>
<name>ASTB_YERPG</name>
<organism>
    <name type="scientific">Yersinia pestis bv. Antiqua (strain Angola)</name>
    <dbReference type="NCBI Taxonomy" id="349746"/>
    <lineage>
        <taxon>Bacteria</taxon>
        <taxon>Pseudomonadati</taxon>
        <taxon>Pseudomonadota</taxon>
        <taxon>Gammaproteobacteria</taxon>
        <taxon>Enterobacterales</taxon>
        <taxon>Yersiniaceae</taxon>
        <taxon>Yersinia</taxon>
    </lineage>
</organism>
<sequence length="447" mass="49234">MAGYEVNFDGLVGLTHHYAGLSFGNEASTTHQNRTSNPRLAAKQGLLKMKALADLGYKQGVLPPQERPAIGVLRKLGFSGSDEQVLSDVARNAPRLLSAVSSASSMWTANAATVSPSADSADGRVHFTVANLHNKFHRAIEAETTAVLLPAVFNNHRHFVHHDALPSVTLLGDEGAANHNRLGGEYDSPAIQMFVYGRQGMESGAVPGRYPARQTREASQAVARLHQLDPKRTVFVQQNPAVIDQGVFHNDVIAVSNRNVLFHHELAFLSSTQVMDDIRCKMAGLEQQLVNIEVPEAEVSVADAVSTYLFNSQLLHKANGKMLLVIPQESQDNPSVWRYLSELVSGDGPIDELRVFDLRESMRNGGGPACLRLRVVLNDAELQAVNSRVMLTPALFVTLNNWVDQHYRDHLQFKDLADPHLLQEGRQALDELTRILNLGPVYPFQRN</sequence>